<evidence type="ECO:0000255" key="1">
    <source>
        <dbReference type="HAMAP-Rule" id="MF_00094"/>
    </source>
</evidence>
<organism>
    <name type="scientific">Sulfurimonas denitrificans (strain ATCC 33889 / DSM 1251)</name>
    <name type="common">Thiomicrospira denitrificans (strain ATCC 33889 / DSM 1251)</name>
    <dbReference type="NCBI Taxonomy" id="326298"/>
    <lineage>
        <taxon>Bacteria</taxon>
        <taxon>Pseudomonadati</taxon>
        <taxon>Campylobacterota</taxon>
        <taxon>Epsilonproteobacteria</taxon>
        <taxon>Campylobacterales</taxon>
        <taxon>Sulfurimonadaceae</taxon>
        <taxon>Sulfurimonas</taxon>
    </lineage>
</organism>
<sequence>MDNYEYTELLKNLSKKMSNITGVVEPDKLYKRVAQIDELENSQDFWNDSSNAALVQKDKTQCERKLKKYNLAKNAIDDAKELYEMAKEENDEDLIAECFNGAQHIEDLIRTMEIEVLLSEETDGNNAILSIHPGAGGTESQDWASILLRMYKRFAERRGWSVEVLDYQAGDEAGIKDVSLLISGENAYGYLKVENGIHRLVRISPFDSNAKRHTSFSSVMVSPEVDDDINIVIEDRDIRVDTYRSSGAGGQHVNKTESAIRITHIATGVVVQCQNDRSQHKNRATAMKMLKSRLYELELENQKAEIAGIAKSEIGWGHQIRSYVMQPYQQIKDTRSNIAYSNVSAILDGDIDKMIEDVLISQNRS</sequence>
<accession>Q30TP0</accession>
<name>RF2_SULDN</name>
<reference key="1">
    <citation type="journal article" date="2008" name="Appl. Environ. Microbiol.">
        <title>Genome of the epsilonproteobacterial chemolithoautotroph Sulfurimonas denitrificans.</title>
        <authorList>
            <person name="Sievert S.M."/>
            <person name="Scott K.M."/>
            <person name="Klotz M.G."/>
            <person name="Chain P.S.G."/>
            <person name="Hauser L.J."/>
            <person name="Hemp J."/>
            <person name="Huegler M."/>
            <person name="Land M."/>
            <person name="Lapidus A."/>
            <person name="Larimer F.W."/>
            <person name="Lucas S."/>
            <person name="Malfatti S.A."/>
            <person name="Meyer F."/>
            <person name="Paulsen I.T."/>
            <person name="Ren Q."/>
            <person name="Simon J."/>
            <person name="Bailey K."/>
            <person name="Diaz E."/>
            <person name="Fitzpatrick K.A."/>
            <person name="Glover B."/>
            <person name="Gwatney N."/>
            <person name="Korajkic A."/>
            <person name="Long A."/>
            <person name="Mobberley J.M."/>
            <person name="Pantry S.N."/>
            <person name="Pazder G."/>
            <person name="Peterson S."/>
            <person name="Quintanilla J.D."/>
            <person name="Sprinkle R."/>
            <person name="Stephens J."/>
            <person name="Thomas P."/>
            <person name="Vaughn R."/>
            <person name="Weber M.J."/>
            <person name="Wooten L.L."/>
        </authorList>
    </citation>
    <scope>NUCLEOTIDE SEQUENCE [LARGE SCALE GENOMIC DNA]</scope>
    <source>
        <strain>ATCC 33889 / DSM 1251</strain>
    </source>
</reference>
<protein>
    <recommendedName>
        <fullName evidence="1">Peptide chain release factor 2</fullName>
        <shortName evidence="1">RF-2</shortName>
    </recommendedName>
</protein>
<comment type="function">
    <text evidence="1">Peptide chain release factor 2 directs the termination of translation in response to the peptide chain termination codons UGA and UAA.</text>
</comment>
<comment type="subcellular location">
    <subcellularLocation>
        <location evidence="1">Cytoplasm</location>
    </subcellularLocation>
</comment>
<comment type="PTM">
    <text evidence="1">Methylated by PrmC. Methylation increases the termination efficiency of RF2.</text>
</comment>
<comment type="similarity">
    <text evidence="1">Belongs to the prokaryotic/mitochondrial release factor family.</text>
</comment>
<keyword id="KW-0963">Cytoplasm</keyword>
<keyword id="KW-0488">Methylation</keyword>
<keyword id="KW-0648">Protein biosynthesis</keyword>
<keyword id="KW-1185">Reference proteome</keyword>
<gene>
    <name evidence="1" type="primary">prfB</name>
    <name type="ordered locus">Suden_0360</name>
</gene>
<dbReference type="EMBL" id="CP000153">
    <property type="protein sequence ID" value="ABB43641.1"/>
    <property type="molecule type" value="Genomic_DNA"/>
</dbReference>
<dbReference type="RefSeq" id="WP_011371995.1">
    <property type="nucleotide sequence ID" value="NC_007575.1"/>
</dbReference>
<dbReference type="SMR" id="Q30TP0"/>
<dbReference type="STRING" id="326298.Suden_0360"/>
<dbReference type="KEGG" id="tdn:Suden_0360"/>
<dbReference type="eggNOG" id="COG1186">
    <property type="taxonomic scope" value="Bacteria"/>
</dbReference>
<dbReference type="HOGENOM" id="CLU_036856_6_0_7"/>
<dbReference type="OrthoDB" id="9806673at2"/>
<dbReference type="Proteomes" id="UP000002714">
    <property type="component" value="Chromosome"/>
</dbReference>
<dbReference type="GO" id="GO:0005737">
    <property type="term" value="C:cytoplasm"/>
    <property type="evidence" value="ECO:0007669"/>
    <property type="project" value="UniProtKB-SubCell"/>
</dbReference>
<dbReference type="GO" id="GO:0016149">
    <property type="term" value="F:translation release factor activity, codon specific"/>
    <property type="evidence" value="ECO:0007669"/>
    <property type="project" value="UniProtKB-UniRule"/>
</dbReference>
<dbReference type="FunFam" id="3.30.160.20:FF:000010">
    <property type="entry name" value="Peptide chain release factor 2"/>
    <property type="match status" value="1"/>
</dbReference>
<dbReference type="Gene3D" id="3.30.160.20">
    <property type="match status" value="1"/>
</dbReference>
<dbReference type="Gene3D" id="3.30.70.1660">
    <property type="match status" value="1"/>
</dbReference>
<dbReference type="Gene3D" id="1.20.58.410">
    <property type="entry name" value="Release factor"/>
    <property type="match status" value="1"/>
</dbReference>
<dbReference type="HAMAP" id="MF_00094">
    <property type="entry name" value="Rel_fac_2"/>
    <property type="match status" value="1"/>
</dbReference>
<dbReference type="InterPro" id="IPR005139">
    <property type="entry name" value="PCRF"/>
</dbReference>
<dbReference type="InterPro" id="IPR000352">
    <property type="entry name" value="Pep_chain_release_fac_I"/>
</dbReference>
<dbReference type="InterPro" id="IPR045853">
    <property type="entry name" value="Pep_chain_release_fac_I_sf"/>
</dbReference>
<dbReference type="InterPro" id="IPR004374">
    <property type="entry name" value="PrfB"/>
</dbReference>
<dbReference type="NCBIfam" id="TIGR00020">
    <property type="entry name" value="prfB"/>
    <property type="match status" value="1"/>
</dbReference>
<dbReference type="PANTHER" id="PTHR43116:SF3">
    <property type="entry name" value="CLASS I PEPTIDE CHAIN RELEASE FACTOR"/>
    <property type="match status" value="1"/>
</dbReference>
<dbReference type="PANTHER" id="PTHR43116">
    <property type="entry name" value="PEPTIDE CHAIN RELEASE FACTOR 2"/>
    <property type="match status" value="1"/>
</dbReference>
<dbReference type="Pfam" id="PF03462">
    <property type="entry name" value="PCRF"/>
    <property type="match status" value="1"/>
</dbReference>
<dbReference type="Pfam" id="PF00472">
    <property type="entry name" value="RF-1"/>
    <property type="match status" value="1"/>
</dbReference>
<dbReference type="SMART" id="SM00937">
    <property type="entry name" value="PCRF"/>
    <property type="match status" value="1"/>
</dbReference>
<dbReference type="SUPFAM" id="SSF75620">
    <property type="entry name" value="Release factor"/>
    <property type="match status" value="1"/>
</dbReference>
<dbReference type="PROSITE" id="PS00745">
    <property type="entry name" value="RF_PROK_I"/>
    <property type="match status" value="1"/>
</dbReference>
<proteinExistence type="inferred from homology"/>
<feature type="chain" id="PRO_1000005020" description="Peptide chain release factor 2">
    <location>
        <begin position="1"/>
        <end position="365"/>
    </location>
</feature>
<feature type="modified residue" description="N5-methylglutamine" evidence="1">
    <location>
        <position position="251"/>
    </location>
</feature>